<reference key="1">
    <citation type="journal article" date="2003" name="Nature">
        <title>The genome sequence of the filamentous fungus Neurospora crassa.</title>
        <authorList>
            <person name="Galagan J.E."/>
            <person name="Calvo S.E."/>
            <person name="Borkovich K.A."/>
            <person name="Selker E.U."/>
            <person name="Read N.D."/>
            <person name="Jaffe D.B."/>
            <person name="FitzHugh W."/>
            <person name="Ma L.-J."/>
            <person name="Smirnov S."/>
            <person name="Purcell S."/>
            <person name="Rehman B."/>
            <person name="Elkins T."/>
            <person name="Engels R."/>
            <person name="Wang S."/>
            <person name="Nielsen C.B."/>
            <person name="Butler J."/>
            <person name="Endrizzi M."/>
            <person name="Qui D."/>
            <person name="Ianakiev P."/>
            <person name="Bell-Pedersen D."/>
            <person name="Nelson M.A."/>
            <person name="Werner-Washburne M."/>
            <person name="Selitrennikoff C.P."/>
            <person name="Kinsey J.A."/>
            <person name="Braun E.L."/>
            <person name="Zelter A."/>
            <person name="Schulte U."/>
            <person name="Kothe G.O."/>
            <person name="Jedd G."/>
            <person name="Mewes H.-W."/>
            <person name="Staben C."/>
            <person name="Marcotte E."/>
            <person name="Greenberg D."/>
            <person name="Roy A."/>
            <person name="Foley K."/>
            <person name="Naylor J."/>
            <person name="Stange-Thomann N."/>
            <person name="Barrett R."/>
            <person name="Gnerre S."/>
            <person name="Kamal M."/>
            <person name="Kamvysselis M."/>
            <person name="Mauceli E.W."/>
            <person name="Bielke C."/>
            <person name="Rudd S."/>
            <person name="Frishman D."/>
            <person name="Krystofova S."/>
            <person name="Rasmussen C."/>
            <person name="Metzenberg R.L."/>
            <person name="Perkins D.D."/>
            <person name="Kroken S."/>
            <person name="Cogoni C."/>
            <person name="Macino G."/>
            <person name="Catcheside D.E.A."/>
            <person name="Li W."/>
            <person name="Pratt R.J."/>
            <person name="Osmani S.A."/>
            <person name="DeSouza C.P.C."/>
            <person name="Glass N.L."/>
            <person name="Orbach M.J."/>
            <person name="Berglund J.A."/>
            <person name="Voelker R."/>
            <person name="Yarden O."/>
            <person name="Plamann M."/>
            <person name="Seiler S."/>
            <person name="Dunlap J.C."/>
            <person name="Radford A."/>
            <person name="Aramayo R."/>
            <person name="Natvig D.O."/>
            <person name="Alex L.A."/>
            <person name="Mannhaupt G."/>
            <person name="Ebbole D.J."/>
            <person name="Freitag M."/>
            <person name="Paulsen I."/>
            <person name="Sachs M.S."/>
            <person name="Lander E.S."/>
            <person name="Nusbaum C."/>
            <person name="Birren B.W."/>
        </authorList>
    </citation>
    <scope>NUCLEOTIDE SEQUENCE [LARGE SCALE GENOMIC DNA]</scope>
    <source>
        <strain>ATCC 24698 / 74-OR23-1A / CBS 708.71 / DSM 1257 / FGSC 987</strain>
    </source>
</reference>
<comment type="function">
    <text evidence="2">Aminopeptidase that preferentially cleaves di- and tripeptides. Also has low epoxide hydrolase activity (in vitro). Can hydrolyze the epoxide leukotriene LTA(4) but it forms preferentially 5,6-dihydroxy-7,9,11,14-eicosatetraenoic acid rather than the cytokine leukotriene B(4) as the product compared to the homologous mammalian enzyme (in vitro).</text>
</comment>
<comment type="catalytic activity">
    <reaction evidence="2">
        <text>an epoxide + H2O = an ethanediol</text>
        <dbReference type="Rhea" id="RHEA:19037"/>
        <dbReference type="ChEBI" id="CHEBI:15377"/>
        <dbReference type="ChEBI" id="CHEBI:32955"/>
        <dbReference type="ChEBI" id="CHEBI:140594"/>
        <dbReference type="EC" id="3.3.2.10"/>
    </reaction>
</comment>
<comment type="cofactor">
    <cofactor evidence="2">
        <name>Zn(2+)</name>
        <dbReference type="ChEBI" id="CHEBI:29105"/>
    </cofactor>
    <text evidence="2">Binds 1 zinc ion per subunit.</text>
</comment>
<comment type="subcellular location">
    <subcellularLocation>
        <location evidence="2">Cytoplasm</location>
    </subcellularLocation>
    <subcellularLocation>
        <location evidence="2">Nucleus</location>
    </subcellularLocation>
</comment>
<comment type="similarity">
    <text evidence="4">Belongs to the peptidase M1 family.</text>
</comment>
<gene>
    <name type="primary">ara-1</name>
    <name type="ORF">NCU06732</name>
</gene>
<proteinExistence type="inferred from homology"/>
<protein>
    <recommendedName>
        <fullName>Leucine aminopeptidase 2</fullName>
        <ecNumber>3.4.11.-</ecNumber>
    </recommendedName>
    <alternativeName>
        <fullName>Epoxide hydrolase</fullName>
        <ecNumber>3.3.2.10</ecNumber>
    </alternativeName>
    <alternativeName>
        <fullName>Leukotriene A-4 hydrolase homolog</fullName>
        <shortName>LTA-4 hydrolase</shortName>
    </alternativeName>
</protein>
<accession>Q7S785</accession>
<name>LKHA4_NEUCR</name>
<feature type="chain" id="PRO_0000324934" description="Leucine aminopeptidase 2">
    <location>
        <begin position="1"/>
        <end position="667"/>
    </location>
</feature>
<feature type="active site" description="Proton acceptor" evidence="3">
    <location>
        <position position="348"/>
    </location>
</feature>
<feature type="active site" description="Proton donor" evidence="3">
    <location>
        <position position="436"/>
    </location>
</feature>
<feature type="binding site" evidence="1">
    <location>
        <begin position="188"/>
        <end position="190"/>
    </location>
    <ligand>
        <name>a peptide</name>
        <dbReference type="ChEBI" id="CHEBI:60466"/>
    </ligand>
</feature>
<feature type="binding site" evidence="1">
    <location>
        <begin position="318"/>
        <end position="323"/>
    </location>
    <ligand>
        <name>a peptide</name>
        <dbReference type="ChEBI" id="CHEBI:60466"/>
    </ligand>
</feature>
<feature type="binding site" evidence="3">
    <location>
        <position position="347"/>
    </location>
    <ligand>
        <name>Zn(2+)</name>
        <dbReference type="ChEBI" id="CHEBI:29105"/>
        <note>catalytic</note>
    </ligand>
</feature>
<feature type="binding site" evidence="3">
    <location>
        <position position="351"/>
    </location>
    <ligand>
        <name>Zn(2+)</name>
        <dbReference type="ChEBI" id="CHEBI:29105"/>
        <note>catalytic</note>
    </ligand>
</feature>
<feature type="binding site" evidence="3">
    <location>
        <position position="370"/>
    </location>
    <ligand>
        <name>Zn(2+)</name>
        <dbReference type="ChEBI" id="CHEBI:29105"/>
        <note>catalytic</note>
    </ligand>
</feature>
<keyword id="KW-0963">Cytoplasm</keyword>
<keyword id="KW-0378">Hydrolase</keyword>
<keyword id="KW-0479">Metal-binding</keyword>
<keyword id="KW-0482">Metalloprotease</keyword>
<keyword id="KW-0539">Nucleus</keyword>
<keyword id="KW-0645">Protease</keyword>
<keyword id="KW-1185">Reference proteome</keyword>
<keyword id="KW-0862">Zinc</keyword>
<evidence type="ECO:0000250" key="1">
    <source>
        <dbReference type="UniProtKB" id="P09960"/>
    </source>
</evidence>
<evidence type="ECO:0000250" key="2">
    <source>
        <dbReference type="UniProtKB" id="Q10740"/>
    </source>
</evidence>
<evidence type="ECO:0000255" key="3">
    <source>
        <dbReference type="PROSITE-ProRule" id="PRU10095"/>
    </source>
</evidence>
<evidence type="ECO:0000305" key="4"/>
<dbReference type="EC" id="3.4.11.-"/>
<dbReference type="EC" id="3.3.2.10"/>
<dbReference type="EMBL" id="CM002240">
    <property type="protein sequence ID" value="EAA31424.2"/>
    <property type="molecule type" value="Genomic_DNA"/>
</dbReference>
<dbReference type="RefSeq" id="XP_960660.2">
    <property type="nucleotide sequence ID" value="XM_955567.3"/>
</dbReference>
<dbReference type="SMR" id="Q7S785"/>
<dbReference type="FunCoup" id="Q7S785">
    <property type="interactions" value="991"/>
</dbReference>
<dbReference type="STRING" id="367110.Q7S785"/>
<dbReference type="MEROPS" id="M01.034"/>
<dbReference type="PaxDb" id="5141-EFNCRP00000006630"/>
<dbReference type="EnsemblFungi" id="EAA31424">
    <property type="protein sequence ID" value="EAA31424"/>
    <property type="gene ID" value="NCU06732"/>
</dbReference>
<dbReference type="GeneID" id="3876807"/>
<dbReference type="KEGG" id="ncr:NCU06732"/>
<dbReference type="VEuPathDB" id="FungiDB:NCU06732"/>
<dbReference type="HOGENOM" id="CLU_014505_1_1_1"/>
<dbReference type="InParanoid" id="Q7S785"/>
<dbReference type="OrthoDB" id="79562at2759"/>
<dbReference type="Proteomes" id="UP000001805">
    <property type="component" value="Chromosome 2, Linkage Group V"/>
</dbReference>
<dbReference type="GO" id="GO:0005829">
    <property type="term" value="C:cytosol"/>
    <property type="evidence" value="ECO:0000318"/>
    <property type="project" value="GO_Central"/>
</dbReference>
<dbReference type="GO" id="GO:0000328">
    <property type="term" value="C:fungal-type vacuole lumen"/>
    <property type="evidence" value="ECO:0007669"/>
    <property type="project" value="EnsemblFungi"/>
</dbReference>
<dbReference type="GO" id="GO:0005771">
    <property type="term" value="C:multivesicular body"/>
    <property type="evidence" value="ECO:0007669"/>
    <property type="project" value="EnsemblFungi"/>
</dbReference>
<dbReference type="GO" id="GO:0005634">
    <property type="term" value="C:nucleus"/>
    <property type="evidence" value="ECO:0007669"/>
    <property type="project" value="UniProtKB-SubCell"/>
</dbReference>
<dbReference type="GO" id="GO:0061957">
    <property type="term" value="C:NVT complex"/>
    <property type="evidence" value="ECO:0007669"/>
    <property type="project" value="EnsemblFungi"/>
</dbReference>
<dbReference type="GO" id="GO:0004177">
    <property type="term" value="F:aminopeptidase activity"/>
    <property type="evidence" value="ECO:0000250"/>
    <property type="project" value="UniProtKB"/>
</dbReference>
<dbReference type="GO" id="GO:0004301">
    <property type="term" value="F:epoxide hydrolase activity"/>
    <property type="evidence" value="ECO:0000250"/>
    <property type="project" value="UniProtKB"/>
</dbReference>
<dbReference type="GO" id="GO:0008237">
    <property type="term" value="F:metallopeptidase activity"/>
    <property type="evidence" value="ECO:0007669"/>
    <property type="project" value="UniProtKB-KW"/>
</dbReference>
<dbReference type="GO" id="GO:0008270">
    <property type="term" value="F:zinc ion binding"/>
    <property type="evidence" value="ECO:0000250"/>
    <property type="project" value="UniProtKB"/>
</dbReference>
<dbReference type="GO" id="GO:0120113">
    <property type="term" value="P:cytoplasm to vacuole targeting by the NVT pathway"/>
    <property type="evidence" value="ECO:0007669"/>
    <property type="project" value="EnsemblFungi"/>
</dbReference>
<dbReference type="GO" id="GO:0006629">
    <property type="term" value="P:lipid metabolic process"/>
    <property type="evidence" value="ECO:0007669"/>
    <property type="project" value="EnsemblFungi"/>
</dbReference>
<dbReference type="GO" id="GO:0043171">
    <property type="term" value="P:peptide catabolic process"/>
    <property type="evidence" value="ECO:0000250"/>
    <property type="project" value="UniProtKB"/>
</dbReference>
<dbReference type="GO" id="GO:0030163">
    <property type="term" value="P:protein catabolic process"/>
    <property type="evidence" value="ECO:0007669"/>
    <property type="project" value="EnsemblFungi"/>
</dbReference>
<dbReference type="GO" id="GO:0006508">
    <property type="term" value="P:proteolysis"/>
    <property type="evidence" value="ECO:0007669"/>
    <property type="project" value="UniProtKB-KW"/>
</dbReference>
<dbReference type="CDD" id="cd09599">
    <property type="entry name" value="M1_LTA4H"/>
    <property type="match status" value="1"/>
</dbReference>
<dbReference type="FunFam" id="1.10.390.10:FF:000009">
    <property type="entry name" value="Leukotriene A(4) hydrolase"/>
    <property type="match status" value="1"/>
</dbReference>
<dbReference type="FunFam" id="1.25.40.320:FF:000001">
    <property type="entry name" value="Leukotriene A(4) hydrolase"/>
    <property type="match status" value="1"/>
</dbReference>
<dbReference type="FunFam" id="2.60.40.1730:FF:000004">
    <property type="entry name" value="Leukotriene A(4) hydrolase"/>
    <property type="match status" value="1"/>
</dbReference>
<dbReference type="FunFam" id="3.30.2010.30:FF:000001">
    <property type="entry name" value="Leukotriene A(4) hydrolase"/>
    <property type="match status" value="1"/>
</dbReference>
<dbReference type="Gene3D" id="3.30.2010.30">
    <property type="match status" value="1"/>
</dbReference>
<dbReference type="Gene3D" id="1.10.390.10">
    <property type="entry name" value="Neutral Protease Domain 2"/>
    <property type="match status" value="1"/>
</dbReference>
<dbReference type="Gene3D" id="1.25.40.320">
    <property type="entry name" value="Peptidase M1, leukotriene A4 hydrolase/aminopeptidase C-terminal domain"/>
    <property type="match status" value="1"/>
</dbReference>
<dbReference type="Gene3D" id="2.60.40.1730">
    <property type="entry name" value="tricorn interacting facor f3 domain"/>
    <property type="match status" value="1"/>
</dbReference>
<dbReference type="InterPro" id="IPR045357">
    <property type="entry name" value="Aminopeptidase_N-like_N"/>
</dbReference>
<dbReference type="InterPro" id="IPR042097">
    <property type="entry name" value="Aminopeptidase_N-like_N_sf"/>
</dbReference>
<dbReference type="InterPro" id="IPR016024">
    <property type="entry name" value="ARM-type_fold"/>
</dbReference>
<dbReference type="InterPro" id="IPR012777">
    <property type="entry name" value="LTA4H"/>
</dbReference>
<dbReference type="InterPro" id="IPR049980">
    <property type="entry name" value="LTA4H_cat"/>
</dbReference>
<dbReference type="InterPro" id="IPR038502">
    <property type="entry name" value="M1_LTA-4_hydro/amino_C_sf"/>
</dbReference>
<dbReference type="InterPro" id="IPR034015">
    <property type="entry name" value="M1_LTA4H"/>
</dbReference>
<dbReference type="InterPro" id="IPR001930">
    <property type="entry name" value="Peptidase_M1"/>
</dbReference>
<dbReference type="InterPro" id="IPR015211">
    <property type="entry name" value="Peptidase_M1_C"/>
</dbReference>
<dbReference type="InterPro" id="IPR014782">
    <property type="entry name" value="Peptidase_M1_dom"/>
</dbReference>
<dbReference type="InterPro" id="IPR027268">
    <property type="entry name" value="Peptidase_M4/M1_CTD_sf"/>
</dbReference>
<dbReference type="NCBIfam" id="TIGR02411">
    <property type="entry name" value="leuko_A4_hydro"/>
    <property type="match status" value="1"/>
</dbReference>
<dbReference type="PANTHER" id="PTHR45726">
    <property type="entry name" value="LEUKOTRIENE A-4 HYDROLASE"/>
    <property type="match status" value="1"/>
</dbReference>
<dbReference type="PANTHER" id="PTHR45726:SF3">
    <property type="entry name" value="LEUKOTRIENE A-4 HYDROLASE"/>
    <property type="match status" value="1"/>
</dbReference>
<dbReference type="Pfam" id="PF09127">
    <property type="entry name" value="Leuk-A4-hydro_C"/>
    <property type="match status" value="1"/>
</dbReference>
<dbReference type="Pfam" id="PF01433">
    <property type="entry name" value="Peptidase_M1"/>
    <property type="match status" value="1"/>
</dbReference>
<dbReference type="Pfam" id="PF17900">
    <property type="entry name" value="Peptidase_M1_N"/>
    <property type="match status" value="1"/>
</dbReference>
<dbReference type="PRINTS" id="PR00756">
    <property type="entry name" value="ALADIPTASE"/>
</dbReference>
<dbReference type="SMART" id="SM01263">
    <property type="entry name" value="Leuk-A4-hydro_C"/>
    <property type="match status" value="1"/>
</dbReference>
<dbReference type="SUPFAM" id="SSF48371">
    <property type="entry name" value="ARM repeat"/>
    <property type="match status" value="1"/>
</dbReference>
<dbReference type="SUPFAM" id="SSF63737">
    <property type="entry name" value="Leukotriene A4 hydrolase N-terminal domain"/>
    <property type="match status" value="1"/>
</dbReference>
<dbReference type="SUPFAM" id="SSF55486">
    <property type="entry name" value="Metalloproteases ('zincins'), catalytic domain"/>
    <property type="match status" value="1"/>
</dbReference>
<dbReference type="PROSITE" id="PS00142">
    <property type="entry name" value="ZINC_PROTEASE"/>
    <property type="match status" value="1"/>
</dbReference>
<organism>
    <name type="scientific">Neurospora crassa (strain ATCC 24698 / 74-OR23-1A / CBS 708.71 / DSM 1257 / FGSC 987)</name>
    <dbReference type="NCBI Taxonomy" id="367110"/>
    <lineage>
        <taxon>Eukaryota</taxon>
        <taxon>Fungi</taxon>
        <taxon>Dikarya</taxon>
        <taxon>Ascomycota</taxon>
        <taxon>Pezizomycotina</taxon>
        <taxon>Sordariomycetes</taxon>
        <taxon>Sordariomycetidae</taxon>
        <taxon>Sordariales</taxon>
        <taxon>Sordariaceae</taxon>
        <taxon>Neurospora</taxon>
    </lineage>
</organism>
<sequence>MWGRGFLQRARFAQLSPSSSSSRSLLSAASAAPPNLLYSHYQRGRWFGCSTANMAPVRDPNTLSNYDAWRTRHTTANLKIDFTAKCLRGSVILELESQTDKASKEIVLDSSYVTVNSIKLNSAPSLWETKARTEPNGSPVHIAVPEGAAKGEVVKVEIELATTDKCTALQWLTPAQTSDKAAPFMFSQCQAIHARSLFPCQDTPDVKSTYDFNITSPYVVVASGVPVPDETKDLGEEKLYKFQQKVPIPSYLFALSSGEIASAPVGKRSCVCTGPNELKASQWELEGDMDKFLEAAEKIVFPYRWGEYNVLVLPPSFPYGGMENPIFTFATPTIISGDKQNIDVIAHELAHSWSGNLVTSCSWEHFWLNEGWTMYLERRILASIHGGDAHFDFSAIRGWKALEEAIKEYGEDHEFTKLCISHKGIDPDDAFSTVPYEKGFHFVWSLDRLVGRENFDKFIPYYFGKWSNKSLDSYEFKDTFLEFFSAPEYSDLKDKIASIDWEGRFHSTGLPPKPEFDTSLADVCYELAEKWKSKDFTPSPSDVASWTGNQVLVFLNAVQDFEEPLTVEQSQALGKAYGLSESKNAELKAAYYHIAMRSKDASAYQGVADLLGEVGRMKFVRPLFRGLNKVDRELALKTFEKNREFYHPICRQMVEKDLGVSEAANSS</sequence>